<protein>
    <recommendedName>
        <fullName evidence="1">Acetylglutamate kinase</fullName>
        <ecNumber evidence="1">2.7.2.8</ecNumber>
    </recommendedName>
    <alternativeName>
        <fullName evidence="1">N-acetyl-L-glutamate 5-phosphotransferase</fullName>
    </alternativeName>
    <alternativeName>
        <fullName evidence="1">NAG kinase</fullName>
        <shortName evidence="1">NAGK</shortName>
    </alternativeName>
</protein>
<sequence>MNPLIIKLGGVLLDSEEALERLFTALVNYRESHQRPLVIVHGGGCVVDELMKGLNLPVKKKDGLRVTPADQIGIITGALAGTANKTLLAWAKKHHIASVGLFLGDGDSVNVTQLDEALGHVGLAQPGSPKLINMLLENGFLPVVSSIGVTEDGQLMNVNADQAATALAATLGADLILLSDVSGILDGKGQRIAEMTASKAEQLIDQGIITDGMIVKVNAALDAARALGRPVDIASWRHAEQLPALFNGTPIGTRILA</sequence>
<proteinExistence type="inferred from homology"/>
<reference key="1">
    <citation type="journal article" date="2011" name="J. Bacteriol.">
        <title>Comparative genomics of 28 Salmonella enterica isolates: evidence for CRISPR-mediated adaptive sublineage evolution.</title>
        <authorList>
            <person name="Fricke W.F."/>
            <person name="Mammel M.K."/>
            <person name="McDermott P.F."/>
            <person name="Tartera C."/>
            <person name="White D.G."/>
            <person name="Leclerc J.E."/>
            <person name="Ravel J."/>
            <person name="Cebula T.A."/>
        </authorList>
    </citation>
    <scope>NUCLEOTIDE SEQUENCE [LARGE SCALE GENOMIC DNA]</scope>
    <source>
        <strain>SL483</strain>
    </source>
</reference>
<comment type="function">
    <text evidence="1">Catalyzes the ATP-dependent phosphorylation of N-acetyl-L-glutamate.</text>
</comment>
<comment type="catalytic activity">
    <reaction evidence="1">
        <text>N-acetyl-L-glutamate + ATP = N-acetyl-L-glutamyl 5-phosphate + ADP</text>
        <dbReference type="Rhea" id="RHEA:14629"/>
        <dbReference type="ChEBI" id="CHEBI:30616"/>
        <dbReference type="ChEBI" id="CHEBI:44337"/>
        <dbReference type="ChEBI" id="CHEBI:57936"/>
        <dbReference type="ChEBI" id="CHEBI:456216"/>
        <dbReference type="EC" id="2.7.2.8"/>
    </reaction>
</comment>
<comment type="pathway">
    <text evidence="1">Amino-acid biosynthesis; L-arginine biosynthesis; N(2)-acetyl-L-ornithine from L-glutamate: step 2/4.</text>
</comment>
<comment type="subunit">
    <text evidence="1">Homodimer.</text>
</comment>
<comment type="subcellular location">
    <subcellularLocation>
        <location evidence="1">Cytoplasm</location>
    </subcellularLocation>
</comment>
<comment type="similarity">
    <text evidence="1">Belongs to the acetylglutamate kinase family. ArgB subfamily.</text>
</comment>
<name>ARGB_SALA4</name>
<gene>
    <name evidence="1" type="primary">argB</name>
    <name type="ordered locus">SeAg_B4363</name>
</gene>
<accession>B5F0U8</accession>
<dbReference type="EC" id="2.7.2.8" evidence="1"/>
<dbReference type="EMBL" id="CP001138">
    <property type="protein sequence ID" value="ACH50629.1"/>
    <property type="molecule type" value="Genomic_DNA"/>
</dbReference>
<dbReference type="SMR" id="B5F0U8"/>
<dbReference type="KEGG" id="sea:SeAg_B4363"/>
<dbReference type="HOGENOM" id="CLU_053680_1_1_6"/>
<dbReference type="UniPathway" id="UPA00068">
    <property type="reaction ID" value="UER00107"/>
</dbReference>
<dbReference type="Proteomes" id="UP000008819">
    <property type="component" value="Chromosome"/>
</dbReference>
<dbReference type="GO" id="GO:0005737">
    <property type="term" value="C:cytoplasm"/>
    <property type="evidence" value="ECO:0007669"/>
    <property type="project" value="UniProtKB-SubCell"/>
</dbReference>
<dbReference type="GO" id="GO:0003991">
    <property type="term" value="F:acetylglutamate kinase activity"/>
    <property type="evidence" value="ECO:0007669"/>
    <property type="project" value="UniProtKB-UniRule"/>
</dbReference>
<dbReference type="GO" id="GO:0005524">
    <property type="term" value="F:ATP binding"/>
    <property type="evidence" value="ECO:0007669"/>
    <property type="project" value="UniProtKB-UniRule"/>
</dbReference>
<dbReference type="GO" id="GO:0042450">
    <property type="term" value="P:arginine biosynthetic process via ornithine"/>
    <property type="evidence" value="ECO:0007669"/>
    <property type="project" value="UniProtKB-UniRule"/>
</dbReference>
<dbReference type="GO" id="GO:0006526">
    <property type="term" value="P:L-arginine biosynthetic process"/>
    <property type="evidence" value="ECO:0007669"/>
    <property type="project" value="UniProtKB-UniPathway"/>
</dbReference>
<dbReference type="CDD" id="cd04249">
    <property type="entry name" value="AAK_NAGK-NC"/>
    <property type="match status" value="1"/>
</dbReference>
<dbReference type="FunFam" id="3.40.1160.10:FF:000008">
    <property type="entry name" value="Acetylglutamate kinase"/>
    <property type="match status" value="1"/>
</dbReference>
<dbReference type="Gene3D" id="3.40.1160.10">
    <property type="entry name" value="Acetylglutamate kinase-like"/>
    <property type="match status" value="1"/>
</dbReference>
<dbReference type="HAMAP" id="MF_00082">
    <property type="entry name" value="ArgB"/>
    <property type="match status" value="1"/>
</dbReference>
<dbReference type="InterPro" id="IPR036393">
    <property type="entry name" value="AceGlu_kinase-like_sf"/>
</dbReference>
<dbReference type="InterPro" id="IPR004662">
    <property type="entry name" value="AcgluKinase_fam"/>
</dbReference>
<dbReference type="InterPro" id="IPR037528">
    <property type="entry name" value="ArgB"/>
</dbReference>
<dbReference type="InterPro" id="IPR001048">
    <property type="entry name" value="Asp/Glu/Uridylate_kinase"/>
</dbReference>
<dbReference type="InterPro" id="IPR041731">
    <property type="entry name" value="NAGK-NC"/>
</dbReference>
<dbReference type="NCBIfam" id="TIGR00761">
    <property type="entry name" value="argB"/>
    <property type="match status" value="1"/>
</dbReference>
<dbReference type="PANTHER" id="PTHR23342">
    <property type="entry name" value="N-ACETYLGLUTAMATE SYNTHASE"/>
    <property type="match status" value="1"/>
</dbReference>
<dbReference type="PANTHER" id="PTHR23342:SF0">
    <property type="entry name" value="N-ACETYLGLUTAMATE SYNTHASE, MITOCHONDRIAL"/>
    <property type="match status" value="1"/>
</dbReference>
<dbReference type="Pfam" id="PF00696">
    <property type="entry name" value="AA_kinase"/>
    <property type="match status" value="1"/>
</dbReference>
<dbReference type="PIRSF" id="PIRSF000728">
    <property type="entry name" value="NAGK"/>
    <property type="match status" value="1"/>
</dbReference>
<dbReference type="SUPFAM" id="SSF53633">
    <property type="entry name" value="Carbamate kinase-like"/>
    <property type="match status" value="1"/>
</dbReference>
<evidence type="ECO:0000255" key="1">
    <source>
        <dbReference type="HAMAP-Rule" id="MF_00082"/>
    </source>
</evidence>
<keyword id="KW-0028">Amino-acid biosynthesis</keyword>
<keyword id="KW-0055">Arginine biosynthesis</keyword>
<keyword id="KW-0067">ATP-binding</keyword>
<keyword id="KW-0963">Cytoplasm</keyword>
<keyword id="KW-0418">Kinase</keyword>
<keyword id="KW-0547">Nucleotide-binding</keyword>
<keyword id="KW-0808">Transferase</keyword>
<feature type="chain" id="PRO_1000092878" description="Acetylglutamate kinase">
    <location>
        <begin position="1"/>
        <end position="257"/>
    </location>
</feature>
<feature type="binding site" evidence="1">
    <location>
        <begin position="43"/>
        <end position="44"/>
    </location>
    <ligand>
        <name>substrate</name>
    </ligand>
</feature>
<feature type="binding site" evidence="1">
    <location>
        <position position="65"/>
    </location>
    <ligand>
        <name>substrate</name>
    </ligand>
</feature>
<feature type="binding site" evidence="1">
    <location>
        <position position="157"/>
    </location>
    <ligand>
        <name>substrate</name>
    </ligand>
</feature>
<feature type="binding site" evidence="1">
    <location>
        <begin position="180"/>
        <end position="185"/>
    </location>
    <ligand>
        <name>ATP</name>
        <dbReference type="ChEBI" id="CHEBI:30616"/>
    </ligand>
</feature>
<feature type="binding site" evidence="1">
    <location>
        <begin position="208"/>
        <end position="210"/>
    </location>
    <ligand>
        <name>ATP</name>
        <dbReference type="ChEBI" id="CHEBI:30616"/>
    </ligand>
</feature>
<feature type="site" description="Transition state stabilizer" evidence="1">
    <location>
        <position position="7"/>
    </location>
</feature>
<feature type="site" description="Transition state stabilizer" evidence="1">
    <location>
        <position position="216"/>
    </location>
</feature>
<organism>
    <name type="scientific">Salmonella agona (strain SL483)</name>
    <dbReference type="NCBI Taxonomy" id="454166"/>
    <lineage>
        <taxon>Bacteria</taxon>
        <taxon>Pseudomonadati</taxon>
        <taxon>Pseudomonadota</taxon>
        <taxon>Gammaproteobacteria</taxon>
        <taxon>Enterobacterales</taxon>
        <taxon>Enterobacteriaceae</taxon>
        <taxon>Salmonella</taxon>
    </lineage>
</organism>